<sequence length="162" mass="18749">MDEGYYSGNLESVLGYVSDMHTKLASITQLVIAKIETIDNDILNNDIVNFIMCRSNLNNPFISFLDTVYTIIDQEIYQNELINSLDDNKIIDCIVNKFMSFYKDNLENIVDAIITLKYIMNNPDFKTTYAEVLGSRIADIDIKQVIRENILQLSNDIRERYL</sequence>
<evidence type="ECO:0000305" key="1"/>
<organism>
    <name type="scientific">Variola virus</name>
    <dbReference type="NCBI Taxonomy" id="10255"/>
    <lineage>
        <taxon>Viruses</taxon>
        <taxon>Varidnaviria</taxon>
        <taxon>Bamfordvirae</taxon>
        <taxon>Nucleocytoviricota</taxon>
        <taxon>Pokkesviricetes</taxon>
        <taxon>Chitovirales</taxon>
        <taxon>Poxviridae</taxon>
        <taxon>Chordopoxvirinae</taxon>
        <taxon>Orthopoxvirus</taxon>
    </lineage>
</organism>
<accession>P0DSQ8</accession>
<accession>P33857</accession>
<dbReference type="EMBL" id="L22579">
    <property type="protein sequence ID" value="AAA60904.1"/>
    <property type="molecule type" value="Genomic_DNA"/>
</dbReference>
<dbReference type="PIR" id="T28594">
    <property type="entry name" value="T28594"/>
</dbReference>
<dbReference type="RefSeq" id="NP_042205.1">
    <property type="nucleotide sequence ID" value="NC_001611.1"/>
</dbReference>
<dbReference type="SMR" id="P0DSQ8"/>
<dbReference type="GeneID" id="1486449"/>
<dbReference type="KEGG" id="vg:1486449"/>
<dbReference type="Proteomes" id="UP000119805">
    <property type="component" value="Segment"/>
</dbReference>
<dbReference type="InterPro" id="IPR009473">
    <property type="entry name" value="Orthopox_A49"/>
</dbReference>
<dbReference type="Pfam" id="PF06489">
    <property type="entry name" value="Orthopox_A49R"/>
    <property type="match status" value="1"/>
</dbReference>
<name>A49_VARV</name>
<feature type="chain" id="PRO_0000448168" description="Protein A49">
    <location>
        <begin position="1"/>
        <end position="162"/>
    </location>
</feature>
<proteinExistence type="inferred from homology"/>
<gene>
    <name type="ORF">A49R</name>
    <name type="ORF">J3R</name>
</gene>
<protein>
    <recommendedName>
        <fullName>Protein A49</fullName>
    </recommendedName>
</protein>
<comment type="similarity">
    <text evidence="1">Belongs to the poxviridae A49 protein family.</text>
</comment>
<reference key="1">
    <citation type="journal article" date="1992" name="J. Gen. Virol.">
        <title>Nucleotide sequence of 21.8 kbp of variola major virus strain Harvey and comparison with vaccinia virus.</title>
        <authorList>
            <person name="Aguado B."/>
            <person name="Selmes I.P."/>
            <person name="Smith G.L."/>
        </authorList>
    </citation>
    <scope>NUCLEOTIDE SEQUENCE [GENOMIC DNA]</scope>
    <source>
        <strain>Harvey</strain>
    </source>
</reference>
<reference key="2">
    <citation type="journal article" date="1993" name="Nature">
        <title>Potential virulence determinants in terminal regions of variola smallpox virus genome.</title>
        <authorList>
            <person name="Massung R.F."/>
            <person name="Esposito J.J."/>
            <person name="Liu L.I."/>
            <person name="Qi J."/>
            <person name="Utterback T.R."/>
            <person name="Knight J.C."/>
            <person name="Aubin L."/>
            <person name="Yuran T.E."/>
            <person name="Parsons J.M."/>
            <person name="Loparev V.N."/>
            <person name="Selivanov N.A."/>
            <person name="Cavallaro K.F."/>
            <person name="Kerlavage A.R."/>
            <person name="Mahy B.W.J."/>
            <person name="Venter J.C."/>
        </authorList>
    </citation>
    <scope>NUCLEOTIDE SEQUENCE [GENOMIC DNA]</scope>
    <source>
        <strain>Bangladesh-1975</strain>
    </source>
</reference>
<organismHost>
    <name type="scientific">Homo sapiens</name>
    <name type="common">Human</name>
    <dbReference type="NCBI Taxonomy" id="9606"/>
</organismHost>